<accession>P29288</accession>
<name>PPA5_RAT</name>
<feature type="signal peptide" evidence="2">
    <location>
        <begin position="1"/>
        <end position="22"/>
    </location>
</feature>
<feature type="chain" id="PRO_0000023985" description="Tartrate-resistant acid phosphatase type 5">
    <location>
        <begin position="23"/>
        <end position="327"/>
    </location>
</feature>
<feature type="binding site">
    <location>
        <position position="35"/>
    </location>
    <ligand>
        <name>Fe cation</name>
        <dbReference type="ChEBI" id="CHEBI:24875"/>
        <label>1</label>
    </ligand>
</feature>
<feature type="binding site">
    <location>
        <position position="73"/>
    </location>
    <ligand>
        <name>Fe cation</name>
        <dbReference type="ChEBI" id="CHEBI:24875"/>
        <label>1</label>
    </ligand>
</feature>
<feature type="binding site">
    <location>
        <position position="73"/>
    </location>
    <ligand>
        <name>Fe cation</name>
        <dbReference type="ChEBI" id="CHEBI:24875"/>
        <label>2</label>
    </ligand>
</feature>
<feature type="binding site">
    <location>
        <position position="76"/>
    </location>
    <ligand>
        <name>Fe cation</name>
        <dbReference type="ChEBI" id="CHEBI:24875"/>
        <label>1</label>
    </ligand>
</feature>
<feature type="binding site">
    <location>
        <position position="112"/>
    </location>
    <ligand>
        <name>Fe cation</name>
        <dbReference type="ChEBI" id="CHEBI:24875"/>
        <label>2</label>
    </ligand>
</feature>
<feature type="binding site">
    <location>
        <position position="207"/>
    </location>
    <ligand>
        <name>Fe cation</name>
        <dbReference type="ChEBI" id="CHEBI:24875"/>
        <label>2</label>
    </ligand>
</feature>
<feature type="binding site">
    <location>
        <position position="242"/>
    </location>
    <ligand>
        <name>Fe cation</name>
        <dbReference type="ChEBI" id="CHEBI:24875"/>
        <label>2</label>
    </ligand>
</feature>
<feature type="binding site">
    <location>
        <position position="244"/>
    </location>
    <ligand>
        <name>Fe cation</name>
        <dbReference type="ChEBI" id="CHEBI:24875"/>
        <label>1</label>
    </ligand>
</feature>
<feature type="glycosylation site" description="N-linked (GlcNAc...) asparagine">
    <location>
        <position position="118"/>
    </location>
</feature>
<feature type="glycosylation site" description="N-linked (GlcNAc...) asparagine" evidence="1">
    <location>
        <position position="149"/>
    </location>
</feature>
<feature type="disulfide bond">
    <location>
        <begin position="163"/>
        <end position="221"/>
    </location>
</feature>
<feature type="strand" evidence="4">
    <location>
        <begin position="28"/>
        <end position="33"/>
    </location>
</feature>
<feature type="strand" evidence="3">
    <location>
        <begin position="40"/>
        <end position="44"/>
    </location>
</feature>
<feature type="helix" evidence="4">
    <location>
        <begin position="47"/>
        <end position="63"/>
    </location>
</feature>
<feature type="strand" evidence="4">
    <location>
        <begin position="66"/>
        <end position="70"/>
    </location>
</feature>
<feature type="turn" evidence="4">
    <location>
        <begin position="76"/>
        <end position="78"/>
    </location>
</feature>
<feature type="turn" evidence="3">
    <location>
        <begin position="83"/>
        <end position="85"/>
    </location>
</feature>
<feature type="helix" evidence="4">
    <location>
        <begin position="87"/>
        <end position="90"/>
    </location>
</feature>
<feature type="turn" evidence="4">
    <location>
        <begin position="91"/>
        <end position="95"/>
    </location>
</feature>
<feature type="helix" evidence="4">
    <location>
        <begin position="99"/>
        <end position="101"/>
    </location>
</feature>
<feature type="helix" evidence="4">
    <location>
        <begin position="114"/>
        <end position="116"/>
    </location>
</feature>
<feature type="helix" evidence="4">
    <location>
        <begin position="119"/>
        <end position="124"/>
    </location>
</feature>
<feature type="helix" evidence="4">
    <location>
        <begin position="125"/>
        <end position="127"/>
    </location>
</feature>
<feature type="strand" evidence="4">
    <location>
        <begin position="130"/>
        <end position="133"/>
    </location>
</feature>
<feature type="strand" evidence="4">
    <location>
        <begin position="136"/>
        <end position="144"/>
    </location>
</feature>
<feature type="strand" evidence="4">
    <location>
        <begin position="146"/>
        <end position="148"/>
    </location>
</feature>
<feature type="strand" evidence="4">
    <location>
        <begin position="151"/>
        <end position="156"/>
    </location>
</feature>
<feature type="helix" evidence="4">
    <location>
        <begin position="159"/>
        <end position="163"/>
    </location>
</feature>
<feature type="helix" evidence="4">
    <location>
        <begin position="166"/>
        <end position="168"/>
    </location>
</feature>
<feature type="helix" evidence="4">
    <location>
        <begin position="180"/>
        <end position="194"/>
    </location>
</feature>
<feature type="strand" evidence="4">
    <location>
        <begin position="200"/>
        <end position="205"/>
    </location>
</feature>
<feature type="strand" evidence="4">
    <location>
        <begin position="214"/>
        <end position="216"/>
    </location>
</feature>
<feature type="helix" evidence="4">
    <location>
        <begin position="220"/>
        <end position="225"/>
    </location>
</feature>
<feature type="helix" evidence="4">
    <location>
        <begin position="227"/>
        <end position="233"/>
    </location>
</feature>
<feature type="strand" evidence="4">
    <location>
        <begin position="237"/>
        <end position="240"/>
    </location>
</feature>
<feature type="strand" evidence="4">
    <location>
        <begin position="242"/>
        <end position="250"/>
    </location>
</feature>
<feature type="strand" evidence="4">
    <location>
        <begin position="256"/>
        <end position="260"/>
    </location>
</feature>
<feature type="strand" evidence="3">
    <location>
        <begin position="262"/>
        <end position="264"/>
    </location>
</feature>
<feature type="helix" evidence="4">
    <location>
        <begin position="273"/>
        <end position="275"/>
    </location>
</feature>
<feature type="strand" evidence="4">
    <location>
        <begin position="281"/>
        <end position="285"/>
    </location>
</feature>
<feature type="strand" evidence="4">
    <location>
        <begin position="293"/>
        <end position="299"/>
    </location>
</feature>
<feature type="strand" evidence="4">
    <location>
        <begin position="301"/>
        <end position="310"/>
    </location>
</feature>
<feature type="strand" evidence="4">
    <location>
        <begin position="315"/>
        <end position="322"/>
    </location>
</feature>
<dbReference type="EC" id="3.1.3.2"/>
<dbReference type="EMBL" id="M76110">
    <property type="protein sequence ID" value="AAA42305.1"/>
    <property type="molecule type" value="mRNA"/>
</dbReference>
<dbReference type="EMBL" id="BC078847">
    <property type="protein sequence ID" value="AAH78847.1"/>
    <property type="molecule type" value="mRNA"/>
</dbReference>
<dbReference type="PIR" id="A41720">
    <property type="entry name" value="A41720"/>
</dbReference>
<dbReference type="RefSeq" id="NP_001257818.1">
    <property type="nucleotide sequence ID" value="NM_001270889.1"/>
</dbReference>
<dbReference type="RefSeq" id="NP_062017.2">
    <property type="nucleotide sequence ID" value="NM_019144.2"/>
</dbReference>
<dbReference type="RefSeq" id="XP_006242754.1">
    <property type="nucleotide sequence ID" value="XM_006242692.5"/>
</dbReference>
<dbReference type="RefSeq" id="XP_006242755.1">
    <property type="nucleotide sequence ID" value="XM_006242693.5"/>
</dbReference>
<dbReference type="RefSeq" id="XP_006242756.1">
    <property type="nucleotide sequence ID" value="XM_006242694.3"/>
</dbReference>
<dbReference type="PDB" id="1QFC">
    <property type="method" value="X-ray"/>
    <property type="resolution" value="2.70 A"/>
    <property type="chains" value="A=22-327"/>
</dbReference>
<dbReference type="PDB" id="1QHW">
    <property type="method" value="X-ray"/>
    <property type="resolution" value="2.20 A"/>
    <property type="chains" value="A=1-327"/>
</dbReference>
<dbReference type="PDBsum" id="1QFC"/>
<dbReference type="PDBsum" id="1QHW"/>
<dbReference type="SMR" id="P29288"/>
<dbReference type="FunCoup" id="P29288">
    <property type="interactions" value="265"/>
</dbReference>
<dbReference type="IntAct" id="P29288">
    <property type="interactions" value="1"/>
</dbReference>
<dbReference type="MINT" id="P29288"/>
<dbReference type="STRING" id="10116.ENSRNOP00000074001"/>
<dbReference type="CarbonylDB" id="P29288"/>
<dbReference type="GlyCosmos" id="P29288">
    <property type="glycosylation" value="2 sites, No reported glycans"/>
</dbReference>
<dbReference type="GlyGen" id="P29288">
    <property type="glycosylation" value="2 sites"/>
</dbReference>
<dbReference type="PhosphoSitePlus" id="P29288"/>
<dbReference type="jPOST" id="P29288"/>
<dbReference type="PaxDb" id="10116-ENSRNOP00000066364"/>
<dbReference type="GeneID" id="25732"/>
<dbReference type="KEGG" id="rno:25732"/>
<dbReference type="AGR" id="RGD:2022"/>
<dbReference type="CTD" id="54"/>
<dbReference type="RGD" id="2022">
    <property type="gene designation" value="Acp5"/>
</dbReference>
<dbReference type="VEuPathDB" id="HostDB:ENSRNOG00000046261"/>
<dbReference type="eggNOG" id="KOG2679">
    <property type="taxonomic scope" value="Eukaryota"/>
</dbReference>
<dbReference type="HOGENOM" id="CLU_043332_1_0_1"/>
<dbReference type="InParanoid" id="P29288"/>
<dbReference type="PhylomeDB" id="P29288"/>
<dbReference type="Reactome" id="R-RNO-196843">
    <property type="pathway name" value="Vitamin B2 (riboflavin) metabolism"/>
</dbReference>
<dbReference type="EvolutionaryTrace" id="P29288"/>
<dbReference type="PRO" id="PR:P29288"/>
<dbReference type="Proteomes" id="UP000002494">
    <property type="component" value="Chromosome 8"/>
</dbReference>
<dbReference type="Bgee" id="ENSRNOG00000046261">
    <property type="expression patterns" value="Expressed in spleen and 18 other cell types or tissues"/>
</dbReference>
<dbReference type="ExpressionAtlas" id="P29288">
    <property type="expression patterns" value="baseline and differential"/>
</dbReference>
<dbReference type="GO" id="GO:0005615">
    <property type="term" value="C:extracellular space"/>
    <property type="evidence" value="ECO:0000314"/>
    <property type="project" value="RGD"/>
</dbReference>
<dbReference type="GO" id="GO:0005764">
    <property type="term" value="C:lysosome"/>
    <property type="evidence" value="ECO:0000266"/>
    <property type="project" value="RGD"/>
</dbReference>
<dbReference type="GO" id="GO:0003993">
    <property type="term" value="F:acid phosphatase activity"/>
    <property type="evidence" value="ECO:0000314"/>
    <property type="project" value="RGD"/>
</dbReference>
<dbReference type="GO" id="GO:0008199">
    <property type="term" value="F:ferric iron binding"/>
    <property type="evidence" value="ECO:0000250"/>
    <property type="project" value="UniProtKB"/>
</dbReference>
<dbReference type="GO" id="GO:0008198">
    <property type="term" value="F:ferrous iron binding"/>
    <property type="evidence" value="ECO:0000250"/>
    <property type="project" value="UniProtKB"/>
</dbReference>
<dbReference type="GO" id="GO:0016787">
    <property type="term" value="F:hydrolase activity"/>
    <property type="evidence" value="ECO:0000314"/>
    <property type="project" value="RGD"/>
</dbReference>
<dbReference type="GO" id="GO:0060349">
    <property type="term" value="P:bone morphogenesis"/>
    <property type="evidence" value="ECO:0000266"/>
    <property type="project" value="RGD"/>
</dbReference>
<dbReference type="GO" id="GO:0045453">
    <property type="term" value="P:bone resorption"/>
    <property type="evidence" value="ECO:0000270"/>
    <property type="project" value="RGD"/>
</dbReference>
<dbReference type="GO" id="GO:0034224">
    <property type="term" value="P:cellular response to zinc ion starvation"/>
    <property type="evidence" value="ECO:0000270"/>
    <property type="project" value="RGD"/>
</dbReference>
<dbReference type="GO" id="GO:0050830">
    <property type="term" value="P:defense response to Gram-positive bacterium"/>
    <property type="evidence" value="ECO:0000266"/>
    <property type="project" value="RGD"/>
</dbReference>
<dbReference type="GO" id="GO:0033555">
    <property type="term" value="P:multicellular organismal response to stress"/>
    <property type="evidence" value="ECO:0000270"/>
    <property type="project" value="RGD"/>
</dbReference>
<dbReference type="GO" id="GO:0007162">
    <property type="term" value="P:negative regulation of cell adhesion"/>
    <property type="evidence" value="ECO:0000314"/>
    <property type="project" value="RGD"/>
</dbReference>
<dbReference type="GO" id="GO:0050728">
    <property type="term" value="P:negative regulation of inflammatory response"/>
    <property type="evidence" value="ECO:0000266"/>
    <property type="project" value="RGD"/>
</dbReference>
<dbReference type="GO" id="GO:0032691">
    <property type="term" value="P:negative regulation of interleukin-1 beta production"/>
    <property type="evidence" value="ECO:0000266"/>
    <property type="project" value="RGD"/>
</dbReference>
<dbReference type="GO" id="GO:0032695">
    <property type="term" value="P:negative regulation of interleukin-12 production"/>
    <property type="evidence" value="ECO:0000266"/>
    <property type="project" value="RGD"/>
</dbReference>
<dbReference type="GO" id="GO:0010936">
    <property type="term" value="P:negative regulation of macrophage cytokine production"/>
    <property type="evidence" value="ECO:0000266"/>
    <property type="project" value="RGD"/>
</dbReference>
<dbReference type="GO" id="GO:0045019">
    <property type="term" value="P:negative regulation of nitric oxide biosynthetic process"/>
    <property type="evidence" value="ECO:0000266"/>
    <property type="project" value="RGD"/>
</dbReference>
<dbReference type="GO" id="GO:0032929">
    <property type="term" value="P:negative regulation of superoxide anion generation"/>
    <property type="evidence" value="ECO:0000266"/>
    <property type="project" value="RGD"/>
</dbReference>
<dbReference type="GO" id="GO:0032720">
    <property type="term" value="P:negative regulation of tumor necrosis factor production"/>
    <property type="evidence" value="ECO:0000266"/>
    <property type="project" value="RGD"/>
</dbReference>
<dbReference type="GO" id="GO:0006809">
    <property type="term" value="P:nitric oxide biosynthetic process"/>
    <property type="evidence" value="ECO:0000266"/>
    <property type="project" value="RGD"/>
</dbReference>
<dbReference type="GO" id="GO:0001503">
    <property type="term" value="P:ossification"/>
    <property type="evidence" value="ECO:0000270"/>
    <property type="project" value="RGD"/>
</dbReference>
<dbReference type="GO" id="GO:0030316">
    <property type="term" value="P:osteoclast differentiation"/>
    <property type="evidence" value="ECO:0000270"/>
    <property type="project" value="RGD"/>
</dbReference>
<dbReference type="GO" id="GO:0030335">
    <property type="term" value="P:positive regulation of cell migration"/>
    <property type="evidence" value="ECO:0000315"/>
    <property type="project" value="RGD"/>
</dbReference>
<dbReference type="GO" id="GO:0070723">
    <property type="term" value="P:response to cholesterol"/>
    <property type="evidence" value="ECO:0000270"/>
    <property type="project" value="RGD"/>
</dbReference>
<dbReference type="GO" id="GO:0034097">
    <property type="term" value="P:response to cytokine"/>
    <property type="evidence" value="ECO:0000266"/>
    <property type="project" value="RGD"/>
</dbReference>
<dbReference type="GO" id="GO:0045471">
    <property type="term" value="P:response to ethanol"/>
    <property type="evidence" value="ECO:0000270"/>
    <property type="project" value="RGD"/>
</dbReference>
<dbReference type="GO" id="GO:0032868">
    <property type="term" value="P:response to insulin"/>
    <property type="evidence" value="ECO:0000270"/>
    <property type="project" value="RGD"/>
</dbReference>
<dbReference type="GO" id="GO:0033591">
    <property type="term" value="P:response to L-ascorbic acid"/>
    <property type="evidence" value="ECO:0000270"/>
    <property type="project" value="RGD"/>
</dbReference>
<dbReference type="GO" id="GO:0032496">
    <property type="term" value="P:response to lipopolysaccharide"/>
    <property type="evidence" value="ECO:0000266"/>
    <property type="project" value="RGD"/>
</dbReference>
<dbReference type="GO" id="GO:0036005">
    <property type="term" value="P:response to macrophage colony-stimulating factor"/>
    <property type="evidence" value="ECO:0000270"/>
    <property type="project" value="RGD"/>
</dbReference>
<dbReference type="GO" id="GO:0009612">
    <property type="term" value="P:response to mechanical stimulus"/>
    <property type="evidence" value="ECO:0000270"/>
    <property type="project" value="RGD"/>
</dbReference>
<dbReference type="GO" id="GO:0010043">
    <property type="term" value="P:response to zinc ion"/>
    <property type="evidence" value="ECO:0000270"/>
    <property type="project" value="RGD"/>
</dbReference>
<dbReference type="GO" id="GO:0042554">
    <property type="term" value="P:superoxide anion generation"/>
    <property type="evidence" value="ECO:0000266"/>
    <property type="project" value="RGD"/>
</dbReference>
<dbReference type="CDD" id="cd07378">
    <property type="entry name" value="MPP_ACP5"/>
    <property type="match status" value="1"/>
</dbReference>
<dbReference type="FunFam" id="3.60.21.10:FF:000033">
    <property type="entry name" value="Tartrate-resistant acid phosphatase type 5"/>
    <property type="match status" value="1"/>
</dbReference>
<dbReference type="Gene3D" id="3.60.21.10">
    <property type="match status" value="1"/>
</dbReference>
<dbReference type="InterPro" id="IPR024927">
    <property type="entry name" value="Acid_PPase"/>
</dbReference>
<dbReference type="InterPro" id="IPR004843">
    <property type="entry name" value="Calcineurin-like_PHP_ApaH"/>
</dbReference>
<dbReference type="InterPro" id="IPR029052">
    <property type="entry name" value="Metallo-depent_PP-like"/>
</dbReference>
<dbReference type="InterPro" id="IPR051558">
    <property type="entry name" value="Metallophosphoesterase_PAP"/>
</dbReference>
<dbReference type="PANTHER" id="PTHR10161">
    <property type="entry name" value="TARTRATE-RESISTANT ACID PHOSPHATASE TYPE 5"/>
    <property type="match status" value="1"/>
</dbReference>
<dbReference type="PANTHER" id="PTHR10161:SF14">
    <property type="entry name" value="TARTRATE-RESISTANT ACID PHOSPHATASE TYPE 5"/>
    <property type="match status" value="1"/>
</dbReference>
<dbReference type="Pfam" id="PF00149">
    <property type="entry name" value="Metallophos"/>
    <property type="match status" value="1"/>
</dbReference>
<dbReference type="PIRSF" id="PIRSF000898">
    <property type="entry name" value="Acid_Ptase_5"/>
    <property type="match status" value="1"/>
</dbReference>
<dbReference type="SUPFAM" id="SSF56300">
    <property type="entry name" value="Metallo-dependent phosphatases"/>
    <property type="match status" value="1"/>
</dbReference>
<sequence length="327" mass="36726">MDTWMVLLGLQILLLPLLAHCTAPASTLRFVAVGDWGGVPNAPFHTAREMANAKEIARTVQIMGADFIMSLGDNFYFTGVHDANDKRFQETFEDVFSDRALRNIPWYVLAGNHDHLGNVSAQIAYSKISKRWNFPSPYYRLRFKVPRSNITVAIFMLDTVMLCGNSDDFVSQQPEMPRDLGVARTQLSWLKKQLAAAKEDYVLVAGHYPIWSIAEHGPTRCLVKNLRPLLAAYGVTAYLCGHDHNLQYLQDENGVGYVLSGAGNFMDPSVRHQRKVPNGYLRFHYGSEDSLGGFTYVEIGSKEMSITYVEASGKSLFKTSLPRRPRP</sequence>
<reference key="1">
    <citation type="journal article" date="1991" name="J. Biol. Chem.">
        <title>Cloning, sequence, and developmental expression of a type 5, tartrate-resistant, acid phosphatase of rat bone.</title>
        <authorList>
            <person name="Ek-Rylander B."/>
            <person name="Bill P."/>
            <person name="Norgaard M."/>
            <person name="Nilsson S."/>
            <person name="Andersson G."/>
        </authorList>
    </citation>
    <scope>NUCLEOTIDE SEQUENCE [MRNA]</scope>
    <source>
        <tissue>Bone</tissue>
    </source>
</reference>
<reference key="2">
    <citation type="journal article" date="2004" name="Genome Res.">
        <title>The status, quality, and expansion of the NIH full-length cDNA project: the Mammalian Gene Collection (MGC).</title>
        <authorList>
            <consortium name="The MGC Project Team"/>
        </authorList>
    </citation>
    <scope>NUCLEOTIDE SEQUENCE [LARGE SCALE MRNA]</scope>
    <source>
        <tissue>Kidney</tissue>
    </source>
</reference>
<reference key="3">
    <citation type="journal article" date="1991" name="J. Bone Miner. Res.">
        <title>Characterization of a tartrate-resistant acid phosphatase (ATPase) from rat bone: hydrodynamic properties and N-terminal amino acid sequence.</title>
        <authorList>
            <person name="Ek-Rylander B."/>
            <person name="Bergman T."/>
            <person name="Andersson G."/>
        </authorList>
    </citation>
    <scope>PROTEIN SEQUENCE OF 23-42</scope>
</reference>
<reference key="4">
    <citation type="journal article" date="1999" name="J. Mol. Biol.">
        <title>Crystal structure of a mammalian purple acid phosphatase.</title>
        <authorList>
            <person name="Uppenberg J."/>
            <person name="Lindqvist F."/>
            <person name="Svensson C."/>
            <person name="Ek-Rylander B."/>
            <person name="Andersson G."/>
        </authorList>
    </citation>
    <scope>X-RAY CRYSTALLOGRAPHY (2.7 ANGSTROMS) OF 22-327</scope>
</reference>
<reference key="5">
    <citation type="journal article" date="1999" name="J. Mol. Biol.">
        <title>Three-dimensional structure of a mammalian purple acid phosphatase at 2.2 A resolution with a gamma-(hydr)oxo bridged di-iron center.</title>
        <authorList>
            <person name="Lindqvist Y."/>
            <person name="Johansson E."/>
            <person name="Kaija H."/>
            <person name="Vihko P."/>
            <person name="Schneider G."/>
        </authorList>
    </citation>
    <scope>X-RAY CRYSTALLOGRAPHY (2.2 ANGSTROMS)</scope>
</reference>
<keyword id="KW-0002">3D-structure</keyword>
<keyword id="KW-0903">Direct protein sequencing</keyword>
<keyword id="KW-1015">Disulfide bond</keyword>
<keyword id="KW-0325">Glycoprotein</keyword>
<keyword id="KW-0378">Hydrolase</keyword>
<keyword id="KW-0408">Iron</keyword>
<keyword id="KW-0458">Lysosome</keyword>
<keyword id="KW-0479">Metal-binding</keyword>
<keyword id="KW-1185">Reference proteome</keyword>
<keyword id="KW-0732">Signal</keyword>
<gene>
    <name type="primary">Acp5</name>
</gene>
<protein>
    <recommendedName>
        <fullName>Tartrate-resistant acid phosphatase type 5</fullName>
        <shortName>TR-AP</shortName>
        <ecNumber>3.1.3.2</ecNumber>
    </recommendedName>
    <alternativeName>
        <fullName>Tartrate-resistant acid ATPase</fullName>
        <shortName>TrATPase</shortName>
    </alternativeName>
    <alternativeName>
        <fullName>Type 5 acid phosphatase</fullName>
    </alternativeName>
</protein>
<evidence type="ECO:0000255" key="1"/>
<evidence type="ECO:0000269" key="2">
    <source>
    </source>
</evidence>
<evidence type="ECO:0007829" key="3">
    <source>
        <dbReference type="PDB" id="1QFC"/>
    </source>
</evidence>
<evidence type="ECO:0007829" key="4">
    <source>
        <dbReference type="PDB" id="1QHW"/>
    </source>
</evidence>
<comment type="function">
    <text>May play a role in the process of bone resorption. The osteoclastic trap acts on nucleotide tri- and diphosphates with higher affinity, compared with other substrates.</text>
</comment>
<comment type="catalytic activity">
    <reaction>
        <text>a phosphate monoester + H2O = an alcohol + phosphate</text>
        <dbReference type="Rhea" id="RHEA:15017"/>
        <dbReference type="ChEBI" id="CHEBI:15377"/>
        <dbReference type="ChEBI" id="CHEBI:30879"/>
        <dbReference type="ChEBI" id="CHEBI:43474"/>
        <dbReference type="ChEBI" id="CHEBI:67140"/>
        <dbReference type="EC" id="3.1.3.2"/>
    </reaction>
</comment>
<comment type="cofactor">
    <cofactor>
        <name>Fe cation</name>
        <dbReference type="ChEBI" id="CHEBI:24875"/>
    </cofactor>
    <text>Binds 2 iron ions per subunit.</text>
</comment>
<comment type="subunit">
    <text>Exists either as monomer or, after proteolytic processing, as a dimer of two chains linked by disulfide bond(s).</text>
</comment>
<comment type="subcellular location">
    <subcellularLocation>
        <location>Lysosome</location>
    </subcellularLocation>
</comment>
<comment type="tissue specificity">
    <text>Characteristic constituent of osteoclasts and some mononuclear preosteoclasts. Preferentially expressed in skeletal tissues.</text>
</comment>
<proteinExistence type="evidence at protein level"/>
<organism>
    <name type="scientific">Rattus norvegicus</name>
    <name type="common">Rat</name>
    <dbReference type="NCBI Taxonomy" id="10116"/>
    <lineage>
        <taxon>Eukaryota</taxon>
        <taxon>Metazoa</taxon>
        <taxon>Chordata</taxon>
        <taxon>Craniata</taxon>
        <taxon>Vertebrata</taxon>
        <taxon>Euteleostomi</taxon>
        <taxon>Mammalia</taxon>
        <taxon>Eutheria</taxon>
        <taxon>Euarchontoglires</taxon>
        <taxon>Glires</taxon>
        <taxon>Rodentia</taxon>
        <taxon>Myomorpha</taxon>
        <taxon>Muroidea</taxon>
        <taxon>Muridae</taxon>
        <taxon>Murinae</taxon>
        <taxon>Rattus</taxon>
    </lineage>
</organism>